<evidence type="ECO:0000250" key="1">
    <source>
        <dbReference type="UniProtKB" id="E4QP00"/>
    </source>
</evidence>
<evidence type="ECO:0000250" key="2">
    <source>
        <dbReference type="UniProtKB" id="Q12053"/>
    </source>
</evidence>
<evidence type="ECO:0000250" key="3">
    <source>
        <dbReference type="UniProtKB" id="Q12062"/>
    </source>
</evidence>
<evidence type="ECO:0000255" key="4"/>
<evidence type="ECO:0000255" key="5">
    <source>
        <dbReference type="PROSITE-ProRule" id="PRU00140"/>
    </source>
</evidence>
<evidence type="ECO:0000255" key="6">
    <source>
        <dbReference type="PROSITE-ProRule" id="PRU00498"/>
    </source>
</evidence>
<evidence type="ECO:0000269" key="7">
    <source>
    </source>
</evidence>
<evidence type="ECO:0000269" key="8">
    <source>
    </source>
</evidence>
<evidence type="ECO:0000269" key="9">
    <source>
    </source>
</evidence>
<evidence type="ECO:0000269" key="10">
    <source>
    </source>
</evidence>
<evidence type="ECO:0000269" key="11">
    <source>
    </source>
</evidence>
<evidence type="ECO:0000269" key="12">
    <source>
    </source>
</evidence>
<evidence type="ECO:0000269" key="13">
    <source>
    </source>
</evidence>
<evidence type="ECO:0000303" key="14">
    <source>
    </source>
</evidence>
<evidence type="ECO:0000303" key="15">
    <source>
    </source>
</evidence>
<evidence type="ECO:0000305" key="16"/>
<evidence type="ECO:0000305" key="17">
    <source>
    </source>
</evidence>
<comment type="function">
    <text evidence="2 7 8 10 11 12 13 14 17">Norsolorinic acid reductase; part of the gene cluster that mediates the biosynthesis of sterigmatocystin (ST), a polyketide-derived furanocoumarin which is part of the most toxic and carcinogenic compounds among the known mycotoxins (PubMed:8643646). The first step in the biosynthesis of sterigmatocystin is the production of hexanoate by the fatty acid synthase (FAS) units stcJ and stcK (PubMed:8962148). The polyketide backbone is assembled by the non-reducing polyketide synthase stcA by condensation of the starter hexanoyl-CoA and 7 malonyl-CoA extender units followed by cyclization and release of norsolorinic acid (By similarity). Norsolorinic acid is the first stable intermediate in the biosynthesis of sterigmatocystin and is converted into averantin (AVN) by the ketoreductase stcE which reduces the hexanoate ketone to an alcohol (Probable) (PubMed:8643646). Averantin is then oxidized into 5'-hydroxyaverantin (HAVN) by the cytochrome P450 monooxygenase stcF (PubMed:10618248). 5'-hydroxyaverantin is further converted to 5'-oxyaverantin (OAVN) by the 5'-hydroxyaverantin dehydrogenase stcG (PubMed:24957370). The next step is the conversion of OAVN into averufin (AVF) which is catalyzed by a yet to be identified enzyme (PubMed:24957370). The cytochrome P450 monooxygenase stcB and the flavin-binding monooxygenase stcW are both required for the conversion of averufin to 1-hydroxyversicolorone (PubMed:10618248). The esterase stcI probably catalyzes the formation of versiconal hemiacetal acetate from 1-hydroxyversicolorone (PubMed:24957370). The oxydoreductase stcN then probably catalyzes the biosynthetic step from versiconal to versicolorin B (VERB) (PubMed:24957370). The next step is performed by the versicolorin B desaturase stcL to produce versicolorin A (VERA) (PubMed:8999832). The ketoreductase stcU and the cytochrome P450 monooxygenase stcS are involved in the conversion of versicolorin A to demethylsterigmatocystin (PubMed:7486998). The Baeyer-Villiger oxidas stcQ and the reductase stcR might be involved in the biosynthetic step from versicolorin A to demethylsterigmatocystin (PubMed:24957370). The final step in the biosynthesis of sterigmatocystin is the methylation of demethylsterigmatocystin catalyzed by the methyltransferase stcP (PubMed:8900026).</text>
</comment>
<comment type="catalytic activity">
    <reaction evidence="3">
        <text>(2S-3S)-versiconal hemiacetal = versicolorin B + H2O</text>
        <dbReference type="Rhea" id="RHEA:33859"/>
        <dbReference type="ChEBI" id="CHEBI:15377"/>
        <dbReference type="ChEBI" id="CHEBI:77950"/>
        <dbReference type="ChEBI" id="CHEBI:77951"/>
        <dbReference type="EC" id="4.2.1.143"/>
    </reaction>
</comment>
<comment type="catalytic activity">
    <reaction evidence="3">
        <text>(S)-5'-oxoaverantin + H(+) = (1'S,5'S)-averufin + H2O</text>
        <dbReference type="Rhea" id="RHEA:35671"/>
        <dbReference type="ChEBI" id="CHEBI:15377"/>
        <dbReference type="ChEBI" id="CHEBI:15378"/>
        <dbReference type="ChEBI" id="CHEBI:71537"/>
        <dbReference type="ChEBI" id="CHEBI:77933"/>
        <dbReference type="EC" id="4.2.1.142"/>
    </reaction>
</comment>
<comment type="cofactor">
    <cofactor evidence="1">
        <name>FAD</name>
        <dbReference type="ChEBI" id="CHEBI:57692"/>
    </cofactor>
</comment>
<comment type="pathway">
    <text evidence="10">Mycotoxin biosynthesis; sterigmatocystin biosynthesis.</text>
</comment>
<comment type="subunit">
    <text evidence="3">Homodimer.</text>
</comment>
<comment type="subcellular location">
    <subcellularLocation>
        <location evidence="3">Cytoplasm</location>
        <location evidence="3">Cytosol</location>
    </subcellularLocation>
</comment>
<comment type="induction">
    <text evidence="9 10">The genes forming the sterigmatocystin biosynthesis cluster are co-regulated and induced on oatmeal porridge or the fungal isolates were grown either on oatmeal porridge or in YEC medium (0.2% yeast extract, 5.0% corn steep liquor).</text>
</comment>
<comment type="similarity">
    <text evidence="16">Belongs to the GMC oxidoreductase family.</text>
</comment>
<comment type="sequence caution" evidence="16">
    <conflict type="erroneous gene model prediction">
        <sequence resource="EMBL-CDS" id="EAA61600"/>
    </conflict>
</comment>
<sequence length="639" mass="69851">MPAWSLLVLSALPVVGMFAGQTTFFSSPWETLFGTAAEQHEAAMDGRIQGRGLLSSHFGWYGWPGQTFDYVIVGGGTAGLAMAHRLSEDGSNSVAVIEAGGFYEIEAGNATEVPMFLFNYFFDNGHVKNPLFDWYQYTEAQPGLAGRKMFYMQGKTLGGSTARGAMLYHRGSKGAYQLWADRVGDDSYTWDNWLPFFKKSVQFSGPLTNPRPANATASNDVSAFAATAEEEGPVQVAYPYLTNAISSWVDKALEKMGFPEAQGFSNGQLLGRSYITHTIHPKTRRRDTASTSYLQTALRTSNSLNVITHTLVKKIDFDEEKRATGVVVNTGGFEWQIGAKKEVILSAGVMRSPQLLMVSGLGPRETLEKLDIPVLSDLPGVGQNMQDTIILGPTNPVKVESHSQLMGSKETLPRSIYEYNNFRTGLLTNPGQDYFAFEKHQPGNLSEATAADIDKAFPADWPTFSYIALDDTFVPQYDGKNYFSMSAALLATFSRGTVTINTTNTADNPVVDPRWLDDPRDKEMAVAAFRRCREIVASETMQQVIDGPELLPGFEYQTDEEILNYIAETSDAYYAGVGTCAMGKPDDPLAVLDSKARVRGVKGLRVVDASAFPFAIDGQPMATVYALAEKVAADIIAGN</sequence>
<protein>
    <recommendedName>
        <fullName evidence="3">Versicolorin B synthase stcN</fullName>
        <ecNumber evidence="3">4.2.1.143</ecNumber>
    </recommendedName>
    <alternativeName>
        <fullName evidence="3">5'-oxoaverantin cyclase stcN</fullName>
        <ecNumber evidence="3">4.2.1.142</ecNumber>
    </alternativeName>
    <alternativeName>
        <fullName evidence="15">Sterigmatocystin biosynthesis cluster protein N</fullName>
    </alternativeName>
</protein>
<keyword id="KW-0963">Cytoplasm</keyword>
<keyword id="KW-0274">FAD</keyword>
<keyword id="KW-0285">Flavoprotein</keyword>
<keyword id="KW-0325">Glycoprotein</keyword>
<keyword id="KW-0456">Lyase</keyword>
<keyword id="KW-1185">Reference proteome</keyword>
<keyword id="KW-0732">Signal</keyword>
<reference key="1">
    <citation type="journal article" date="2005" name="Nature">
        <title>Sequencing of Aspergillus nidulans and comparative analysis with A. fumigatus and A. oryzae.</title>
        <authorList>
            <person name="Galagan J.E."/>
            <person name="Calvo S.E."/>
            <person name="Cuomo C."/>
            <person name="Ma L.-J."/>
            <person name="Wortman J.R."/>
            <person name="Batzoglou S."/>
            <person name="Lee S.-I."/>
            <person name="Bastuerkmen M."/>
            <person name="Spevak C.C."/>
            <person name="Clutterbuck J."/>
            <person name="Kapitonov V."/>
            <person name="Jurka J."/>
            <person name="Scazzocchio C."/>
            <person name="Farman M.L."/>
            <person name="Butler J."/>
            <person name="Purcell S."/>
            <person name="Harris S."/>
            <person name="Braus G.H."/>
            <person name="Draht O."/>
            <person name="Busch S."/>
            <person name="D'Enfert C."/>
            <person name="Bouchier C."/>
            <person name="Goldman G.H."/>
            <person name="Bell-Pedersen D."/>
            <person name="Griffiths-Jones S."/>
            <person name="Doonan J.H."/>
            <person name="Yu J."/>
            <person name="Vienken K."/>
            <person name="Pain A."/>
            <person name="Freitag M."/>
            <person name="Selker E.U."/>
            <person name="Archer D.B."/>
            <person name="Penalva M.A."/>
            <person name="Oakley B.R."/>
            <person name="Momany M."/>
            <person name="Tanaka T."/>
            <person name="Kumagai T."/>
            <person name="Asai K."/>
            <person name="Machida M."/>
            <person name="Nierman W.C."/>
            <person name="Denning D.W."/>
            <person name="Caddick M.X."/>
            <person name="Hynes M."/>
            <person name="Paoletti M."/>
            <person name="Fischer R."/>
            <person name="Miller B.L."/>
            <person name="Dyer P.S."/>
            <person name="Sachs M.S."/>
            <person name="Osmani S.A."/>
            <person name="Birren B.W."/>
        </authorList>
    </citation>
    <scope>NUCLEOTIDE SEQUENCE [LARGE SCALE GENOMIC DNA]</scope>
    <source>
        <strain>FGSC A4 / ATCC 38163 / CBS 112.46 / NRRL 194 / M139</strain>
    </source>
</reference>
<reference key="2">
    <citation type="journal article" date="2009" name="Fungal Genet. Biol.">
        <title>The 2008 update of the Aspergillus nidulans genome annotation: a community effort.</title>
        <authorList>
            <person name="Wortman J.R."/>
            <person name="Gilsenan J.M."/>
            <person name="Joardar V."/>
            <person name="Deegan J."/>
            <person name="Clutterbuck J."/>
            <person name="Andersen M.R."/>
            <person name="Archer D."/>
            <person name="Bencina M."/>
            <person name="Braus G."/>
            <person name="Coutinho P."/>
            <person name="von Dohren H."/>
            <person name="Doonan J."/>
            <person name="Driessen A.J."/>
            <person name="Durek P."/>
            <person name="Espeso E."/>
            <person name="Fekete E."/>
            <person name="Flipphi M."/>
            <person name="Estrada C.G."/>
            <person name="Geysens S."/>
            <person name="Goldman G."/>
            <person name="de Groot P.W."/>
            <person name="Hansen K."/>
            <person name="Harris S.D."/>
            <person name="Heinekamp T."/>
            <person name="Helmstaedt K."/>
            <person name="Henrissat B."/>
            <person name="Hofmann G."/>
            <person name="Homan T."/>
            <person name="Horio T."/>
            <person name="Horiuchi H."/>
            <person name="James S."/>
            <person name="Jones M."/>
            <person name="Karaffa L."/>
            <person name="Karanyi Z."/>
            <person name="Kato M."/>
            <person name="Keller N."/>
            <person name="Kelly D.E."/>
            <person name="Kiel J.A."/>
            <person name="Kim J.M."/>
            <person name="van der Klei I.J."/>
            <person name="Klis F.M."/>
            <person name="Kovalchuk A."/>
            <person name="Krasevec N."/>
            <person name="Kubicek C.P."/>
            <person name="Liu B."/>
            <person name="Maccabe A."/>
            <person name="Meyer V."/>
            <person name="Mirabito P."/>
            <person name="Miskei M."/>
            <person name="Mos M."/>
            <person name="Mullins J."/>
            <person name="Nelson D.R."/>
            <person name="Nielsen J."/>
            <person name="Oakley B.R."/>
            <person name="Osmani S.A."/>
            <person name="Pakula T."/>
            <person name="Paszewski A."/>
            <person name="Paulsen I."/>
            <person name="Pilsyk S."/>
            <person name="Pocsi I."/>
            <person name="Punt P.J."/>
            <person name="Ram A.F."/>
            <person name="Ren Q."/>
            <person name="Robellet X."/>
            <person name="Robson G."/>
            <person name="Seiboth B."/>
            <person name="van Solingen P."/>
            <person name="Specht T."/>
            <person name="Sun J."/>
            <person name="Taheri-Talesh N."/>
            <person name="Takeshita N."/>
            <person name="Ussery D."/>
            <person name="vanKuyk P.A."/>
            <person name="Visser H."/>
            <person name="van de Vondervoort P.J."/>
            <person name="de Vries R.P."/>
            <person name="Walton J."/>
            <person name="Xiang X."/>
            <person name="Xiong Y."/>
            <person name="Zeng A.P."/>
            <person name="Brandt B.W."/>
            <person name="Cornell M.J."/>
            <person name="van den Hondel C.A."/>
            <person name="Visser J."/>
            <person name="Oliver S.G."/>
            <person name="Turner G."/>
        </authorList>
    </citation>
    <scope>GENOME REANNOTATION</scope>
    <source>
        <strain>FGSC A4 / ATCC 38163 / CBS 112.46 / NRRL 194 / M139</strain>
    </source>
</reference>
<reference key="3">
    <citation type="journal article" date="1994" name="Appl. Environ. Microbiol.">
        <title>Aspergillus nidulans verA is required for production of the mycotoxin sterigmatocystin.</title>
        <authorList>
            <person name="Keller N.P."/>
            <person name="Kantz N.J."/>
            <person name="Adams T.H."/>
        </authorList>
    </citation>
    <scope>FUNCTION</scope>
    <scope>INDUCTION</scope>
</reference>
<reference key="4">
    <citation type="journal article" date="1995" name="Appl. Environ. Microbiol.">
        <title>StcS, a putative P-450 monooxygenase, is required for the conversion of versicolorin A to sterigmatocystin in Aspergillus nidulans.</title>
        <authorList>
            <person name="Keller N.P."/>
            <person name="Segner S."/>
            <person name="Bhatnagar D."/>
            <person name="Adams T.H."/>
        </authorList>
    </citation>
    <scope>FUNCTION</scope>
</reference>
<reference key="5">
    <citation type="journal article" date="1995" name="J. Bacteriol.">
        <title>Sterigmatocystin biosynthesis in Aspergillus nidulans requires a novel type I polyketide synthase.</title>
        <authorList>
            <person name="Yu J.-H."/>
            <person name="Leonard T.J."/>
        </authorList>
    </citation>
    <scope>FUNCTION</scope>
    <source>
        <strain>FGSC A4 / ATCC 38163 / CBS 112.46 / NRRL 194 / M139</strain>
    </source>
</reference>
<reference key="6">
    <citation type="journal article" date="1996" name="Appl. Environ. Microbiol.">
        <title>Aspergillus nidulans stcP encodes an O-methyltransferase that is required for sterigmatocystin biosynthesis.</title>
        <authorList>
            <person name="Kelkar H.S."/>
            <person name="Keller N.P."/>
            <person name="Adams T.H."/>
        </authorList>
    </citation>
    <scope>FUNCTION</scope>
</reference>
<reference key="7">
    <citation type="journal article" date="1996" name="Proc. Natl. Acad. Sci. U.S.A.">
        <title>Aspergillus has distinct fatty acid synthases for primary and secondary metabolism.</title>
        <authorList>
            <person name="Brown D.W."/>
            <person name="Adams T.H."/>
            <person name="Keller N.P."/>
        </authorList>
    </citation>
    <scope>FUNCTION</scope>
</reference>
<reference key="8">
    <citation type="journal article" date="1996" name="Proc. Natl. Acad. Sci. U.S.A.">
        <title>Twenty-five coregulated transcripts define a sterigmatocystin gene cluster in Aspergillus nidulans.</title>
        <authorList>
            <person name="Brown D.W."/>
            <person name="Yu J.-H."/>
            <person name="Kelkar H.S."/>
            <person name="Fernandes M."/>
            <person name="Nesbitt T.C."/>
            <person name="Keller N.P."/>
            <person name="Adams T.H."/>
            <person name="Leonard T.J."/>
        </authorList>
    </citation>
    <scope>INDUCTION</scope>
    <scope>FUNCTION</scope>
    <scope>PATHWAY</scope>
</reference>
<reference key="9">
    <citation type="journal article" date="1997" name="J. Biol. Chem.">
        <title>Aspergillus nidulans stcL encodes a putative cytochrome P-450 monooxygenase required for bisfuran desaturation during aflatoxin/sterigmatocystin biosynthesis.</title>
        <authorList>
            <person name="Kelkar H.S."/>
            <person name="Skloss T.W."/>
            <person name="Haw J.F."/>
            <person name="Keller N.P."/>
            <person name="Adams T.H."/>
        </authorList>
    </citation>
    <scope>FUNCTION</scope>
</reference>
<reference key="10">
    <citation type="journal article" date="2000" name="Appl. Environ. Microbiol.">
        <title>Requirement of monooxygenase-mediated steps for sterigmatocystin biosynthesis by Aspergillus nidulans.</title>
        <authorList>
            <person name="Keller N.P."/>
            <person name="Watanabe C.M."/>
            <person name="Kelkar H.S."/>
            <person name="Adams T.H."/>
            <person name="Townsend C.A."/>
        </authorList>
    </citation>
    <scope>FUNCTION</scope>
</reference>
<reference key="11">
    <citation type="journal article" date="2012" name="Metabolites">
        <title>Genetics of polyketide metabolism in Aspergillus nidulans.</title>
        <authorList>
            <person name="Klejnstrup M.L."/>
            <person name="Frandsen R.J."/>
            <person name="Holm D.K."/>
            <person name="Nielsen M.T."/>
            <person name="Mortensen U.H."/>
            <person name="Larsen T.O."/>
            <person name="Nielsen J.B."/>
        </authorList>
    </citation>
    <scope>REVIEW ON STERIGMATOCYSTIN BIOSYNTHESIS</scope>
</reference>
<organism>
    <name type="scientific">Emericella nidulans (strain FGSC A4 / ATCC 38163 / CBS 112.46 / NRRL 194 / M139)</name>
    <name type="common">Aspergillus nidulans</name>
    <dbReference type="NCBI Taxonomy" id="227321"/>
    <lineage>
        <taxon>Eukaryota</taxon>
        <taxon>Fungi</taxon>
        <taxon>Dikarya</taxon>
        <taxon>Ascomycota</taxon>
        <taxon>Pezizomycotina</taxon>
        <taxon>Eurotiomycetes</taxon>
        <taxon>Eurotiomycetidae</taxon>
        <taxon>Eurotiales</taxon>
        <taxon>Aspergillaceae</taxon>
        <taxon>Aspergillus</taxon>
        <taxon>Aspergillus subgen. Nidulantes</taxon>
    </lineage>
</organism>
<accession>C8VDT4</accession>
<accession>Q5AV68</accession>
<name>STCN_EMENI</name>
<dbReference type="EC" id="4.2.1.143" evidence="3"/>
<dbReference type="EC" id="4.2.1.142" evidence="3"/>
<dbReference type="EMBL" id="AACD01000132">
    <property type="protein sequence ID" value="EAA61600.1"/>
    <property type="status" value="ALT_SEQ"/>
    <property type="molecule type" value="Genomic_DNA"/>
</dbReference>
<dbReference type="EMBL" id="BN001304">
    <property type="protein sequence ID" value="CBF80156.1"/>
    <property type="molecule type" value="Genomic_DNA"/>
</dbReference>
<dbReference type="RefSeq" id="XP_681081.1">
    <property type="nucleotide sequence ID" value="XM_675989.1"/>
</dbReference>
<dbReference type="SMR" id="C8VDT4"/>
<dbReference type="STRING" id="227321.C8VDT4"/>
<dbReference type="CAZy" id="AA3">
    <property type="family name" value="Auxiliary Activities 3"/>
</dbReference>
<dbReference type="GlyCosmos" id="C8VDT4">
    <property type="glycosylation" value="4 sites, No reported glycans"/>
</dbReference>
<dbReference type="EnsemblFungi" id="CBF80156">
    <property type="protein sequence ID" value="CBF80156"/>
    <property type="gene ID" value="ANIA_07812"/>
</dbReference>
<dbReference type="VEuPathDB" id="FungiDB:AN7812"/>
<dbReference type="eggNOG" id="KOG1238">
    <property type="taxonomic scope" value="Eukaryota"/>
</dbReference>
<dbReference type="HOGENOM" id="CLU_002865_6_3_1"/>
<dbReference type="InParanoid" id="C8VDT4"/>
<dbReference type="OMA" id="REMFYMQ"/>
<dbReference type="OrthoDB" id="269227at2759"/>
<dbReference type="UniPathway" id="UPA00377"/>
<dbReference type="Proteomes" id="UP000000560">
    <property type="component" value="Chromosome IV"/>
</dbReference>
<dbReference type="GO" id="GO:0005829">
    <property type="term" value="C:cytosol"/>
    <property type="evidence" value="ECO:0007669"/>
    <property type="project" value="UniProtKB-SubCell"/>
</dbReference>
<dbReference type="GO" id="GO:0050660">
    <property type="term" value="F:flavin adenine dinucleotide binding"/>
    <property type="evidence" value="ECO:0007669"/>
    <property type="project" value="InterPro"/>
</dbReference>
<dbReference type="GO" id="GO:0016829">
    <property type="term" value="F:lyase activity"/>
    <property type="evidence" value="ECO:0007669"/>
    <property type="project" value="UniProtKB-KW"/>
</dbReference>
<dbReference type="GO" id="GO:0016491">
    <property type="term" value="F:oxidoreductase activity"/>
    <property type="evidence" value="ECO:0000318"/>
    <property type="project" value="GO_Central"/>
</dbReference>
<dbReference type="GO" id="GO:0016614">
    <property type="term" value="F:oxidoreductase activity, acting on CH-OH group of donors"/>
    <property type="evidence" value="ECO:0007669"/>
    <property type="project" value="InterPro"/>
</dbReference>
<dbReference type="GO" id="GO:0044550">
    <property type="term" value="P:secondary metabolite biosynthetic process"/>
    <property type="evidence" value="ECO:0000318"/>
    <property type="project" value="GO_Central"/>
</dbReference>
<dbReference type="GO" id="GO:0045461">
    <property type="term" value="P:sterigmatocystin biosynthetic process"/>
    <property type="evidence" value="ECO:0000270"/>
    <property type="project" value="GO_Central"/>
</dbReference>
<dbReference type="Gene3D" id="3.50.50.60">
    <property type="entry name" value="FAD/NAD(P)-binding domain"/>
    <property type="match status" value="1"/>
</dbReference>
<dbReference type="Gene3D" id="3.30.560.10">
    <property type="entry name" value="Glucose Oxidase, domain 3"/>
    <property type="match status" value="1"/>
</dbReference>
<dbReference type="InterPro" id="IPR036188">
    <property type="entry name" value="FAD/NAD-bd_sf"/>
</dbReference>
<dbReference type="InterPro" id="IPR012132">
    <property type="entry name" value="GMC_OxRdtase"/>
</dbReference>
<dbReference type="InterPro" id="IPR000172">
    <property type="entry name" value="GMC_OxRdtase_N"/>
</dbReference>
<dbReference type="InterPro" id="IPR007867">
    <property type="entry name" value="GMC_OxRtase_C"/>
</dbReference>
<dbReference type="InterPro" id="IPR000014">
    <property type="entry name" value="PAS"/>
</dbReference>
<dbReference type="PANTHER" id="PTHR11552:SF138">
    <property type="entry name" value="DEHYDROGENASE PKFF-RELATED"/>
    <property type="match status" value="1"/>
</dbReference>
<dbReference type="PANTHER" id="PTHR11552">
    <property type="entry name" value="GLUCOSE-METHANOL-CHOLINE GMC OXIDOREDUCTASE"/>
    <property type="match status" value="1"/>
</dbReference>
<dbReference type="Pfam" id="PF05199">
    <property type="entry name" value="GMC_oxred_C"/>
    <property type="match status" value="1"/>
</dbReference>
<dbReference type="Pfam" id="PF00732">
    <property type="entry name" value="GMC_oxred_N"/>
    <property type="match status" value="1"/>
</dbReference>
<dbReference type="PIRSF" id="PIRSF000137">
    <property type="entry name" value="Alcohol_oxidase"/>
    <property type="match status" value="1"/>
</dbReference>
<dbReference type="SUPFAM" id="SSF54373">
    <property type="entry name" value="FAD-linked reductases, C-terminal domain"/>
    <property type="match status" value="1"/>
</dbReference>
<dbReference type="SUPFAM" id="SSF51905">
    <property type="entry name" value="FAD/NAD(P)-binding domain"/>
    <property type="match status" value="1"/>
</dbReference>
<dbReference type="PROSITE" id="PS50112">
    <property type="entry name" value="PAS"/>
    <property type="match status" value="1"/>
</dbReference>
<proteinExistence type="evidence at transcript level"/>
<feature type="signal peptide" evidence="4">
    <location>
        <begin position="1"/>
        <end position="19"/>
    </location>
</feature>
<feature type="chain" id="PRO_5002993113" description="Versicolorin B synthase stcN">
    <location>
        <begin position="20"/>
        <end position="639"/>
    </location>
</feature>
<feature type="domain" description="PAS" evidence="5">
    <location>
        <begin position="263"/>
        <end position="301"/>
    </location>
</feature>
<feature type="binding site" evidence="1">
    <location>
        <begin position="77"/>
        <end position="78"/>
    </location>
    <ligand>
        <name>FAD</name>
        <dbReference type="ChEBI" id="CHEBI:57692"/>
    </ligand>
</feature>
<feature type="binding site" evidence="1">
    <location>
        <begin position="98"/>
        <end position="99"/>
    </location>
    <ligand>
        <name>FAD</name>
        <dbReference type="ChEBI" id="CHEBI:57692"/>
    </ligand>
</feature>
<feature type="binding site" evidence="1">
    <location>
        <begin position="164"/>
        <end position="167"/>
    </location>
    <ligand>
        <name>FAD</name>
        <dbReference type="ChEBI" id="CHEBI:57692"/>
    </ligand>
</feature>
<feature type="binding site" evidence="1">
    <location>
        <position position="609"/>
    </location>
    <ligand>
        <name>FAD</name>
        <dbReference type="ChEBI" id="CHEBI:57692"/>
    </ligand>
</feature>
<feature type="binding site" evidence="1">
    <location>
        <begin position="620"/>
        <end position="621"/>
    </location>
    <ligand>
        <name>FAD</name>
        <dbReference type="ChEBI" id="CHEBI:57692"/>
    </ligand>
</feature>
<feature type="glycosylation site" description="N-linked (GlcNAc...) asparagine" evidence="6">
    <location>
        <position position="109"/>
    </location>
</feature>
<feature type="glycosylation site" description="N-linked (GlcNAc...) asparagine" evidence="6">
    <location>
        <position position="214"/>
    </location>
</feature>
<feature type="glycosylation site" description="N-linked (GlcNAc...) asparagine" evidence="6">
    <location>
        <position position="444"/>
    </location>
</feature>
<feature type="glycosylation site" description="N-linked (GlcNAc...) asparagine" evidence="6">
    <location>
        <position position="501"/>
    </location>
</feature>
<gene>
    <name evidence="15" type="primary">stcN</name>
    <name type="ORF">AN7812</name>
    <name type="ORF">ANIA_07812</name>
</gene>